<gene>
    <name type="primary">ppsA</name>
    <name type="ordered locus">AF_0710</name>
</gene>
<organism>
    <name type="scientific">Archaeoglobus fulgidus (strain ATCC 49558 / DSM 4304 / JCM 9628 / NBRC 100126 / VC-16)</name>
    <dbReference type="NCBI Taxonomy" id="224325"/>
    <lineage>
        <taxon>Archaea</taxon>
        <taxon>Methanobacteriati</taxon>
        <taxon>Methanobacteriota</taxon>
        <taxon>Archaeoglobi</taxon>
        <taxon>Archaeoglobales</taxon>
        <taxon>Archaeoglobaceae</taxon>
        <taxon>Archaeoglobus</taxon>
    </lineage>
</organism>
<protein>
    <recommendedName>
        <fullName>Probable phosphoenolpyruvate synthase</fullName>
        <shortName>PEP synthase</shortName>
        <ecNumber>2.7.9.2</ecNumber>
    </recommendedName>
    <alternativeName>
        <fullName>Pyruvate, water dikinase</fullName>
    </alternativeName>
</protein>
<sequence>MPVLWLADVDKNDIPLVGGKGANLGELLRAEIPVPDGFVVDARTFREFIQKTGIAEKIYSLLRELDVEDTEKLDAVSREIREIIEKTEMPEDIEREIREAYRKLCEEEGKEVYVAVRSSATAEDLPDASFAGQQETYLNVVGEDEVVEKVKKCWGSLFTPRAIYYRVQKGFRHEDVSIAVVVQKMVNSEKSGVMFTSHPVSGEKKCIIEAVFGLGEAIVSGLVTPDTYVYDRVKRKIEEVKIGEKKFMLTRKDGKTVKVELPPEKANERVLSDEEIEKLVTLGELIEDHYGKPQDVEWAIEGGKIYIVQSRPITTIRKEKKEAEEEVSEEAEGKILLKGLGASPGIASGKVKVIFSEKEISKVEEGDILVTTMTTPDMVPAMKRAAAIVTDEGGMTCHAAIVSRELGVPAVVGTKVATKVLKDGMVVTVDGEKGIVYEGRIEKKEEPKPVVASAPIITATEVKVNISIPDVAERVARETNADGVGLFRIEHMVLGLEKHPMKFIRDGEIDRYIDLLYQEMKKVVKAFYPKPVWIRTIDAPTDEFRAMEGGEDEPIEANPMLGFRGIRRDLAEEEHFRAEMRAIKKLVDEGYTNVGVMLPLITSPEEVKRAKEIAISEGLPLDKIEFGVMVETPAAALILEDIIKEGIDFVSLGTNDLTQYTLAVDRNNENVAYLYNETHPAVLKLIERTIKVCKEHGVKSSICGQAGSYPHVVEKLVEFGIDSVSANPDAVQRIREVVARAEKRIILEKLRKI</sequence>
<evidence type="ECO:0000250" key="1"/>
<evidence type="ECO:0000305" key="2"/>
<keyword id="KW-0067">ATP-binding</keyword>
<keyword id="KW-0418">Kinase</keyword>
<keyword id="KW-0460">Magnesium</keyword>
<keyword id="KW-0479">Metal-binding</keyword>
<keyword id="KW-0547">Nucleotide-binding</keyword>
<keyword id="KW-1185">Reference proteome</keyword>
<keyword id="KW-0808">Transferase</keyword>
<proteinExistence type="inferred from homology"/>
<accession>O29548</accession>
<dbReference type="EC" id="2.7.9.2"/>
<dbReference type="EMBL" id="AE000782">
    <property type="protein sequence ID" value="AAB90532.1"/>
    <property type="molecule type" value="Genomic_DNA"/>
</dbReference>
<dbReference type="PIR" id="F69338">
    <property type="entry name" value="F69338"/>
</dbReference>
<dbReference type="RefSeq" id="WP_010878213.1">
    <property type="nucleotide sequence ID" value="NC_000917.1"/>
</dbReference>
<dbReference type="SMR" id="O29548"/>
<dbReference type="STRING" id="224325.AF_0710"/>
<dbReference type="PaxDb" id="224325-AF_0710"/>
<dbReference type="EnsemblBacteria" id="AAB90532">
    <property type="protein sequence ID" value="AAB90532"/>
    <property type="gene ID" value="AF_0710"/>
</dbReference>
<dbReference type="GeneID" id="24794310"/>
<dbReference type="KEGG" id="afu:AF_0710"/>
<dbReference type="eggNOG" id="arCOG01111">
    <property type="taxonomic scope" value="Archaea"/>
</dbReference>
<dbReference type="HOGENOM" id="CLU_007308_6_2_2"/>
<dbReference type="OrthoDB" id="23397at2157"/>
<dbReference type="PhylomeDB" id="O29548"/>
<dbReference type="UniPathway" id="UPA00138"/>
<dbReference type="Proteomes" id="UP000002199">
    <property type="component" value="Chromosome"/>
</dbReference>
<dbReference type="GO" id="GO:0005524">
    <property type="term" value="F:ATP binding"/>
    <property type="evidence" value="ECO:0007669"/>
    <property type="project" value="UniProtKB-KW"/>
</dbReference>
<dbReference type="GO" id="GO:0046872">
    <property type="term" value="F:metal ion binding"/>
    <property type="evidence" value="ECO:0007669"/>
    <property type="project" value="UniProtKB-KW"/>
</dbReference>
<dbReference type="GO" id="GO:0008986">
    <property type="term" value="F:pyruvate, water dikinase activity"/>
    <property type="evidence" value="ECO:0007669"/>
    <property type="project" value="UniProtKB-EC"/>
</dbReference>
<dbReference type="GO" id="GO:0006094">
    <property type="term" value="P:gluconeogenesis"/>
    <property type="evidence" value="ECO:0007669"/>
    <property type="project" value="UniProtKB-UniPathway"/>
</dbReference>
<dbReference type="FunFam" id="3.30.1490.20:FF:000010">
    <property type="entry name" value="Phosphoenolpyruvate synthase"/>
    <property type="match status" value="1"/>
</dbReference>
<dbReference type="Gene3D" id="3.30.1490.20">
    <property type="entry name" value="ATP-grasp fold, A domain"/>
    <property type="match status" value="1"/>
</dbReference>
<dbReference type="Gene3D" id="3.30.470.20">
    <property type="entry name" value="ATP-grasp fold, B domain"/>
    <property type="match status" value="1"/>
</dbReference>
<dbReference type="Gene3D" id="3.20.20.60">
    <property type="entry name" value="Phosphoenolpyruvate-binding domains"/>
    <property type="match status" value="1"/>
</dbReference>
<dbReference type="Gene3D" id="3.50.30.10">
    <property type="entry name" value="Phosphohistidine domain"/>
    <property type="match status" value="1"/>
</dbReference>
<dbReference type="InterPro" id="IPR013815">
    <property type="entry name" value="ATP_grasp_subdomain_1"/>
</dbReference>
<dbReference type="InterPro" id="IPR008279">
    <property type="entry name" value="PEP-util_enz_mobile_dom"/>
</dbReference>
<dbReference type="InterPro" id="IPR006319">
    <property type="entry name" value="PEP_synth"/>
</dbReference>
<dbReference type="InterPro" id="IPR018274">
    <property type="entry name" value="PEP_util_AS"/>
</dbReference>
<dbReference type="InterPro" id="IPR000121">
    <property type="entry name" value="PEP_util_C"/>
</dbReference>
<dbReference type="InterPro" id="IPR023151">
    <property type="entry name" value="PEP_util_CS"/>
</dbReference>
<dbReference type="InterPro" id="IPR036637">
    <property type="entry name" value="Phosphohistidine_dom_sf"/>
</dbReference>
<dbReference type="InterPro" id="IPR002192">
    <property type="entry name" value="PPDK_AMP/ATP-bd"/>
</dbReference>
<dbReference type="InterPro" id="IPR015813">
    <property type="entry name" value="Pyrv/PenolPyrv_kinase-like_dom"/>
</dbReference>
<dbReference type="InterPro" id="IPR040442">
    <property type="entry name" value="Pyrv_kinase-like_dom_sf"/>
</dbReference>
<dbReference type="NCBIfam" id="TIGR01418">
    <property type="entry name" value="PEP_synth"/>
    <property type="match status" value="1"/>
</dbReference>
<dbReference type="NCBIfam" id="NF005057">
    <property type="entry name" value="PRK06464.1"/>
    <property type="match status" value="1"/>
</dbReference>
<dbReference type="PANTHER" id="PTHR43030">
    <property type="entry name" value="PHOSPHOENOLPYRUVATE SYNTHASE"/>
    <property type="match status" value="1"/>
</dbReference>
<dbReference type="PANTHER" id="PTHR43030:SF1">
    <property type="entry name" value="PHOSPHOENOLPYRUVATE SYNTHASE"/>
    <property type="match status" value="1"/>
</dbReference>
<dbReference type="Pfam" id="PF00391">
    <property type="entry name" value="PEP-utilizers"/>
    <property type="match status" value="1"/>
</dbReference>
<dbReference type="Pfam" id="PF02896">
    <property type="entry name" value="PEP-utilizers_C"/>
    <property type="match status" value="1"/>
</dbReference>
<dbReference type="Pfam" id="PF01326">
    <property type="entry name" value="PPDK_N"/>
    <property type="match status" value="1"/>
</dbReference>
<dbReference type="PIRSF" id="PIRSF000854">
    <property type="entry name" value="PEP_synthase"/>
    <property type="match status" value="1"/>
</dbReference>
<dbReference type="PRINTS" id="PR01736">
    <property type="entry name" value="PHPHTRNFRASE"/>
</dbReference>
<dbReference type="SUPFAM" id="SSF56059">
    <property type="entry name" value="Glutathione synthetase ATP-binding domain-like"/>
    <property type="match status" value="1"/>
</dbReference>
<dbReference type="SUPFAM" id="SSF51621">
    <property type="entry name" value="Phosphoenolpyruvate/pyruvate domain"/>
    <property type="match status" value="1"/>
</dbReference>
<dbReference type="SUPFAM" id="SSF52009">
    <property type="entry name" value="Phosphohistidine domain"/>
    <property type="match status" value="1"/>
</dbReference>
<dbReference type="PROSITE" id="PS00742">
    <property type="entry name" value="PEP_ENZYMES_2"/>
    <property type="match status" value="1"/>
</dbReference>
<dbReference type="PROSITE" id="PS00370">
    <property type="entry name" value="PEP_ENZYMES_PHOS_SITE"/>
    <property type="match status" value="1"/>
</dbReference>
<feature type="chain" id="PRO_0000147041" description="Probable phosphoenolpyruvate synthase">
    <location>
        <begin position="1"/>
        <end position="753"/>
    </location>
</feature>
<feature type="active site" description="Tele-phosphohistidine intermediate" evidence="1">
    <location>
        <position position="398"/>
    </location>
</feature>
<feature type="active site" description="Proton donor" evidence="1">
    <location>
        <position position="703"/>
    </location>
</feature>
<feature type="binding site" evidence="1">
    <location>
        <position position="488"/>
    </location>
    <ligand>
        <name>substrate</name>
    </ligand>
</feature>
<feature type="binding site" evidence="1">
    <location>
        <position position="535"/>
    </location>
    <ligand>
        <name>substrate</name>
    </ligand>
</feature>
<feature type="binding site" evidence="1">
    <location>
        <position position="631"/>
    </location>
    <ligand>
        <name>Mg(2+)</name>
        <dbReference type="ChEBI" id="CHEBI:18420"/>
    </ligand>
</feature>
<feature type="binding site" evidence="1">
    <location>
        <position position="631"/>
    </location>
    <ligand>
        <name>substrate</name>
    </ligand>
</feature>
<feature type="binding site" evidence="1">
    <location>
        <position position="653"/>
    </location>
    <ligand>
        <name>substrate</name>
    </ligand>
</feature>
<feature type="binding site" evidence="1">
    <location>
        <position position="654"/>
    </location>
    <ligand>
        <name>substrate</name>
    </ligand>
</feature>
<feature type="binding site" evidence="1">
    <location>
        <position position="655"/>
    </location>
    <ligand>
        <name>substrate</name>
    </ligand>
</feature>
<feature type="binding site" evidence="1">
    <location>
        <position position="656"/>
    </location>
    <ligand>
        <name>Mg(2+)</name>
        <dbReference type="ChEBI" id="CHEBI:18420"/>
    </ligand>
</feature>
<feature type="binding site" evidence="1">
    <location>
        <position position="656"/>
    </location>
    <ligand>
        <name>substrate</name>
    </ligand>
</feature>
<reference key="1">
    <citation type="journal article" date="1997" name="Nature">
        <title>The complete genome sequence of the hyperthermophilic, sulphate-reducing archaeon Archaeoglobus fulgidus.</title>
        <authorList>
            <person name="Klenk H.-P."/>
            <person name="Clayton R.A."/>
            <person name="Tomb J.-F."/>
            <person name="White O."/>
            <person name="Nelson K.E."/>
            <person name="Ketchum K.A."/>
            <person name="Dodson R.J."/>
            <person name="Gwinn M.L."/>
            <person name="Hickey E.K."/>
            <person name="Peterson J.D."/>
            <person name="Richardson D.L."/>
            <person name="Kerlavage A.R."/>
            <person name="Graham D.E."/>
            <person name="Kyrpides N.C."/>
            <person name="Fleischmann R.D."/>
            <person name="Quackenbush J."/>
            <person name="Lee N.H."/>
            <person name="Sutton G.G."/>
            <person name="Gill S.R."/>
            <person name="Kirkness E.F."/>
            <person name="Dougherty B.A."/>
            <person name="McKenney K."/>
            <person name="Adams M.D."/>
            <person name="Loftus B.J."/>
            <person name="Peterson S.N."/>
            <person name="Reich C.I."/>
            <person name="McNeil L.K."/>
            <person name="Badger J.H."/>
            <person name="Glodek A."/>
            <person name="Zhou L."/>
            <person name="Overbeek R."/>
            <person name="Gocayne J.D."/>
            <person name="Weidman J.F."/>
            <person name="McDonald L.A."/>
            <person name="Utterback T.R."/>
            <person name="Cotton M.D."/>
            <person name="Spriggs T."/>
            <person name="Artiach P."/>
            <person name="Kaine B.P."/>
            <person name="Sykes S.M."/>
            <person name="Sadow P.W."/>
            <person name="D'Andrea K.P."/>
            <person name="Bowman C."/>
            <person name="Fujii C."/>
            <person name="Garland S.A."/>
            <person name="Mason T.M."/>
            <person name="Olsen G.J."/>
            <person name="Fraser C.M."/>
            <person name="Smith H.O."/>
            <person name="Woese C.R."/>
            <person name="Venter J.C."/>
        </authorList>
    </citation>
    <scope>NUCLEOTIDE SEQUENCE [LARGE SCALE GENOMIC DNA]</scope>
    <source>
        <strain>ATCC 49558 / DSM 4304 / JCM 9628 / NBRC 100126 / VC-16</strain>
    </source>
</reference>
<name>PPSA_ARCFU</name>
<comment type="function">
    <text evidence="1">Catalyzes the phosphorylation of pyruvate to phosphoenolpyruvate.</text>
</comment>
<comment type="catalytic activity">
    <reaction>
        <text>pyruvate + ATP + H2O = phosphoenolpyruvate + AMP + phosphate + 2 H(+)</text>
        <dbReference type="Rhea" id="RHEA:11364"/>
        <dbReference type="ChEBI" id="CHEBI:15361"/>
        <dbReference type="ChEBI" id="CHEBI:15377"/>
        <dbReference type="ChEBI" id="CHEBI:15378"/>
        <dbReference type="ChEBI" id="CHEBI:30616"/>
        <dbReference type="ChEBI" id="CHEBI:43474"/>
        <dbReference type="ChEBI" id="CHEBI:58702"/>
        <dbReference type="ChEBI" id="CHEBI:456215"/>
        <dbReference type="EC" id="2.7.9.2"/>
    </reaction>
</comment>
<comment type="cofactor">
    <cofactor evidence="1">
        <name>Mg(2+)</name>
        <dbReference type="ChEBI" id="CHEBI:18420"/>
    </cofactor>
</comment>
<comment type="pathway">
    <text>Carbohydrate biosynthesis; gluconeogenesis.</text>
</comment>
<comment type="domain">
    <text evidence="1">The N-terminal domain contains the ATP/Pi binding site, the central domain the pyrophosphate/phosphate carrier histidine, and the C-terminal domain the pyruvate binding site.</text>
</comment>
<comment type="miscellaneous">
    <text evidence="1">The reaction takes place in three steps, mediated by a phosphocarrier histidine residue located on the surface of the central domain. The two first partial reactions are catalyzed at an active site located on the N-terminal domain, and the third partial reaction is catalyzed at an active site located on the C-terminal domain. For catalytic turnover, the central domain swivels from the concave surface of the N-terminal domain to that of the C-terminal domain (By similarity).</text>
</comment>
<comment type="similarity">
    <text evidence="2">Belongs to the PEP-utilizing enzyme family.</text>
</comment>